<keyword id="KW-0227">DNA damage</keyword>
<keyword id="KW-0234">DNA repair</keyword>
<keyword id="KW-0238">DNA-binding</keyword>
<keyword id="KW-0326">Glycosidase</keyword>
<keyword id="KW-0378">Hydrolase</keyword>
<keyword id="KW-0456">Lyase</keyword>
<keyword id="KW-0479">Metal-binding</keyword>
<keyword id="KW-0511">Multifunctional enzyme</keyword>
<keyword id="KW-0862">Zinc</keyword>
<keyword id="KW-0863">Zinc-finger</keyword>
<accession>Q5PCL7</accession>
<name>END8_SALPA</name>
<dbReference type="EC" id="3.2.2.-" evidence="1"/>
<dbReference type="EC" id="4.2.99.18" evidence="1"/>
<dbReference type="EMBL" id="CP000026">
    <property type="protein sequence ID" value="AAV77918.1"/>
    <property type="molecule type" value="Genomic_DNA"/>
</dbReference>
<dbReference type="RefSeq" id="WP_001113959.1">
    <property type="nucleotide sequence ID" value="NC_006511.1"/>
</dbReference>
<dbReference type="SMR" id="Q5PCL7"/>
<dbReference type="KEGG" id="spt:SPA2015"/>
<dbReference type="HOGENOM" id="CLU_038423_2_2_6"/>
<dbReference type="Proteomes" id="UP000008185">
    <property type="component" value="Chromosome"/>
</dbReference>
<dbReference type="GO" id="GO:0140078">
    <property type="term" value="F:class I DNA-(apurinic or apyrimidinic site) endonuclease activity"/>
    <property type="evidence" value="ECO:0007669"/>
    <property type="project" value="UniProtKB-EC"/>
</dbReference>
<dbReference type="GO" id="GO:0003684">
    <property type="term" value="F:damaged DNA binding"/>
    <property type="evidence" value="ECO:0007669"/>
    <property type="project" value="InterPro"/>
</dbReference>
<dbReference type="GO" id="GO:0000703">
    <property type="term" value="F:oxidized pyrimidine nucleobase lesion DNA N-glycosylase activity"/>
    <property type="evidence" value="ECO:0007669"/>
    <property type="project" value="UniProtKB-UniRule"/>
</dbReference>
<dbReference type="GO" id="GO:0008270">
    <property type="term" value="F:zinc ion binding"/>
    <property type="evidence" value="ECO:0007669"/>
    <property type="project" value="UniProtKB-UniRule"/>
</dbReference>
<dbReference type="GO" id="GO:0006284">
    <property type="term" value="P:base-excision repair"/>
    <property type="evidence" value="ECO:0007669"/>
    <property type="project" value="InterPro"/>
</dbReference>
<dbReference type="CDD" id="cd08965">
    <property type="entry name" value="EcNei-like_N"/>
    <property type="match status" value="1"/>
</dbReference>
<dbReference type="FunFam" id="1.10.8.50:FF:000005">
    <property type="entry name" value="Endonuclease 8"/>
    <property type="match status" value="1"/>
</dbReference>
<dbReference type="FunFam" id="3.20.190.10:FF:000002">
    <property type="entry name" value="Endonuclease 8"/>
    <property type="match status" value="1"/>
</dbReference>
<dbReference type="Gene3D" id="1.10.8.50">
    <property type="match status" value="1"/>
</dbReference>
<dbReference type="Gene3D" id="3.20.190.10">
    <property type="entry name" value="MutM-like, N-terminal"/>
    <property type="match status" value="1"/>
</dbReference>
<dbReference type="HAMAP" id="MF_01253">
    <property type="entry name" value="Endonuclease_8"/>
    <property type="match status" value="1"/>
</dbReference>
<dbReference type="InterPro" id="IPR015886">
    <property type="entry name" value="DNA_glyclase/AP_lyase_DNA-bd"/>
</dbReference>
<dbReference type="InterPro" id="IPR015887">
    <property type="entry name" value="DNA_glyclase_Znf_dom_DNA_BS"/>
</dbReference>
<dbReference type="InterPro" id="IPR044091">
    <property type="entry name" value="EcNei-like_N"/>
</dbReference>
<dbReference type="InterPro" id="IPR023713">
    <property type="entry name" value="Endonuclease-VIII"/>
</dbReference>
<dbReference type="InterPro" id="IPR012319">
    <property type="entry name" value="FPG_cat"/>
</dbReference>
<dbReference type="InterPro" id="IPR035937">
    <property type="entry name" value="MutM-like_N-ter"/>
</dbReference>
<dbReference type="InterPro" id="IPR010979">
    <property type="entry name" value="Ribosomal_uS13-like_H2TH"/>
</dbReference>
<dbReference type="InterPro" id="IPR000214">
    <property type="entry name" value="Znf_DNA_glyclase/AP_lyase"/>
</dbReference>
<dbReference type="InterPro" id="IPR010663">
    <property type="entry name" value="Znf_FPG/IleRS"/>
</dbReference>
<dbReference type="NCBIfam" id="NF007763">
    <property type="entry name" value="PRK10445.1"/>
    <property type="match status" value="1"/>
</dbReference>
<dbReference type="PANTHER" id="PTHR42697">
    <property type="entry name" value="ENDONUCLEASE 8"/>
    <property type="match status" value="1"/>
</dbReference>
<dbReference type="PANTHER" id="PTHR42697:SF1">
    <property type="entry name" value="ENDONUCLEASE 8"/>
    <property type="match status" value="1"/>
</dbReference>
<dbReference type="Pfam" id="PF01149">
    <property type="entry name" value="Fapy_DNA_glyco"/>
    <property type="match status" value="1"/>
</dbReference>
<dbReference type="Pfam" id="PF06831">
    <property type="entry name" value="H2TH"/>
    <property type="match status" value="1"/>
</dbReference>
<dbReference type="Pfam" id="PF06827">
    <property type="entry name" value="zf-FPG_IleRS"/>
    <property type="match status" value="1"/>
</dbReference>
<dbReference type="SMART" id="SM00898">
    <property type="entry name" value="Fapy_DNA_glyco"/>
    <property type="match status" value="1"/>
</dbReference>
<dbReference type="SMART" id="SM01232">
    <property type="entry name" value="H2TH"/>
    <property type="match status" value="1"/>
</dbReference>
<dbReference type="SUPFAM" id="SSF57716">
    <property type="entry name" value="Glucocorticoid receptor-like (DNA-binding domain)"/>
    <property type="match status" value="1"/>
</dbReference>
<dbReference type="SUPFAM" id="SSF81624">
    <property type="entry name" value="N-terminal domain of MutM-like DNA repair proteins"/>
    <property type="match status" value="1"/>
</dbReference>
<dbReference type="SUPFAM" id="SSF46946">
    <property type="entry name" value="S13-like H2TH domain"/>
    <property type="match status" value="1"/>
</dbReference>
<dbReference type="PROSITE" id="PS51068">
    <property type="entry name" value="FPG_CAT"/>
    <property type="match status" value="1"/>
</dbReference>
<dbReference type="PROSITE" id="PS01242">
    <property type="entry name" value="ZF_FPG_1"/>
    <property type="match status" value="1"/>
</dbReference>
<dbReference type="PROSITE" id="PS51066">
    <property type="entry name" value="ZF_FPG_2"/>
    <property type="match status" value="1"/>
</dbReference>
<organism>
    <name type="scientific">Salmonella paratyphi A (strain ATCC 9150 / SARB42)</name>
    <dbReference type="NCBI Taxonomy" id="295319"/>
    <lineage>
        <taxon>Bacteria</taxon>
        <taxon>Pseudomonadati</taxon>
        <taxon>Pseudomonadota</taxon>
        <taxon>Gammaproteobacteria</taxon>
        <taxon>Enterobacterales</taxon>
        <taxon>Enterobacteriaceae</taxon>
        <taxon>Salmonella</taxon>
    </lineage>
</organism>
<evidence type="ECO:0000255" key="1">
    <source>
        <dbReference type="HAMAP-Rule" id="MF_01253"/>
    </source>
</evidence>
<comment type="function">
    <text evidence="1">Involved in base excision repair of DNA damaged by oxidation or by mutagenic agents. Acts as a DNA glycosylase that recognizes and removes damaged bases. Has a preference for oxidized pyrimidines, such as thymine glycol, 5,6-dihydrouracil and 5,6-dihydrothymine. Has AP (apurinic/apyrimidinic) lyase activity and introduces nicks in the DNA strand. Cleaves the DNA backbone by beta-delta elimination to generate a single-strand break at the site of the removed base with both 3'- and 5'-phosphates.</text>
</comment>
<comment type="catalytic activity">
    <reaction evidence="1">
        <text>2'-deoxyribonucleotide-(2'-deoxyribose 5'-phosphate)-2'-deoxyribonucleotide-DNA = a 3'-end 2'-deoxyribonucleotide-(2,3-dehydro-2,3-deoxyribose 5'-phosphate)-DNA + a 5'-end 5'-phospho-2'-deoxyribonucleoside-DNA + H(+)</text>
        <dbReference type="Rhea" id="RHEA:66592"/>
        <dbReference type="Rhea" id="RHEA-COMP:13180"/>
        <dbReference type="Rhea" id="RHEA-COMP:16897"/>
        <dbReference type="Rhea" id="RHEA-COMP:17067"/>
        <dbReference type="ChEBI" id="CHEBI:15378"/>
        <dbReference type="ChEBI" id="CHEBI:136412"/>
        <dbReference type="ChEBI" id="CHEBI:157695"/>
        <dbReference type="ChEBI" id="CHEBI:167181"/>
        <dbReference type="EC" id="4.2.99.18"/>
    </reaction>
</comment>
<comment type="cofactor">
    <cofactor evidence="1">
        <name>Zn(2+)</name>
        <dbReference type="ChEBI" id="CHEBI:29105"/>
    </cofactor>
    <text evidence="1">Binds 1 zinc ion per subunit.</text>
</comment>
<comment type="similarity">
    <text evidence="1">Belongs to the FPG family.</text>
</comment>
<proteinExistence type="inferred from homology"/>
<sequence length="263" mass="29847">MPEGPEIRRAADNLEAAIKGKPLTDVWFAFAQLKPYESQLTGQIITRIETRGKALLTHFSNGLTLYSHNQLYGVWRVIDTGEIPQTTRILRVRLQTADKTILLYSASDIEMLTAEQLTTHPFLQRVGPDVLDARLTPEEVKARLLSPRFRNRQFSGLLLDQAFLAGLGNYLRVEILWQVGLTGQHKAKDLNEAQLNALSHALLDIPRLSYTTRGQADENKHHGALFRFKVFHRDGEACERCGGIIEKTTLSSRPFYWCPHCQK</sequence>
<feature type="initiator methionine" description="Removed" evidence="1">
    <location>
        <position position="1"/>
    </location>
</feature>
<feature type="chain" id="PRO_1000067208" description="Endonuclease 8">
    <location>
        <begin position="2"/>
        <end position="263"/>
    </location>
</feature>
<feature type="zinc finger region" description="FPG-type" evidence="1">
    <location>
        <begin position="229"/>
        <end position="263"/>
    </location>
</feature>
<feature type="active site" description="Schiff-base intermediate with DNA" evidence="1">
    <location>
        <position position="2"/>
    </location>
</feature>
<feature type="active site" description="Proton donor" evidence="1">
    <location>
        <position position="3"/>
    </location>
</feature>
<feature type="active site" description="Proton donor; for beta-elimination activity" evidence="1">
    <location>
        <position position="53"/>
    </location>
</feature>
<feature type="active site" description="Proton donor; for delta-elimination activity" evidence="1">
    <location>
        <position position="253"/>
    </location>
</feature>
<feature type="binding site" evidence="1">
    <location>
        <position position="70"/>
    </location>
    <ligand>
        <name>DNA</name>
        <dbReference type="ChEBI" id="CHEBI:16991"/>
    </ligand>
</feature>
<feature type="binding site" evidence="1">
    <location>
        <position position="125"/>
    </location>
    <ligand>
        <name>DNA</name>
        <dbReference type="ChEBI" id="CHEBI:16991"/>
    </ligand>
</feature>
<feature type="binding site" evidence="1">
    <location>
        <position position="169"/>
    </location>
    <ligand>
        <name>DNA</name>
        <dbReference type="ChEBI" id="CHEBI:16991"/>
    </ligand>
</feature>
<gene>
    <name evidence="1" type="primary">nei</name>
    <name type="ordered locus">SPA2015</name>
</gene>
<protein>
    <recommendedName>
        <fullName evidence="1">Endonuclease 8</fullName>
    </recommendedName>
    <alternativeName>
        <fullName evidence="1">DNA glycosylase/AP lyase Nei</fullName>
        <ecNumber evidence="1">3.2.2.-</ecNumber>
        <ecNumber evidence="1">4.2.99.18</ecNumber>
    </alternativeName>
    <alternativeName>
        <fullName evidence="1">DNA-(apurinic or apyrimidinic site) lyase Nei</fullName>
    </alternativeName>
    <alternativeName>
        <fullName evidence="1">Endonuclease VIII</fullName>
    </alternativeName>
</protein>
<reference key="1">
    <citation type="journal article" date="2004" name="Nat. Genet.">
        <title>Comparison of genome degradation in Paratyphi A and Typhi, human-restricted serovars of Salmonella enterica that cause typhoid.</title>
        <authorList>
            <person name="McClelland M."/>
            <person name="Sanderson K.E."/>
            <person name="Clifton S.W."/>
            <person name="Latreille P."/>
            <person name="Porwollik S."/>
            <person name="Sabo A."/>
            <person name="Meyer R."/>
            <person name="Bieri T."/>
            <person name="Ozersky P."/>
            <person name="McLellan M."/>
            <person name="Harkins C.R."/>
            <person name="Wang C."/>
            <person name="Nguyen C."/>
            <person name="Berghoff A."/>
            <person name="Elliott G."/>
            <person name="Kohlberg S."/>
            <person name="Strong C."/>
            <person name="Du F."/>
            <person name="Carter J."/>
            <person name="Kremizki C."/>
            <person name="Layman D."/>
            <person name="Leonard S."/>
            <person name="Sun H."/>
            <person name="Fulton L."/>
            <person name="Nash W."/>
            <person name="Miner T."/>
            <person name="Minx P."/>
            <person name="Delehaunty K."/>
            <person name="Fronick C."/>
            <person name="Magrini V."/>
            <person name="Nhan M."/>
            <person name="Warren W."/>
            <person name="Florea L."/>
            <person name="Spieth J."/>
            <person name="Wilson R.K."/>
        </authorList>
    </citation>
    <scope>NUCLEOTIDE SEQUENCE [LARGE SCALE GENOMIC DNA]</scope>
    <source>
        <strain>ATCC 9150 / SARB42</strain>
    </source>
</reference>